<gene>
    <name type="primary">DCTN6</name>
</gene>
<reference evidence="9" key="1">
    <citation type="submission" date="2009-10" db="EMBL/GenBank/DDBJ databases">
        <title>Cloning of porcine genes involved in fat metabolism.</title>
        <authorList>
            <person name="Matsumoto T."/>
            <person name="Okumura N."/>
            <person name="Uenishi H."/>
            <person name="Hamasima N."/>
        </authorList>
    </citation>
    <scope>NUCLEOTIDE SEQUENCE [MRNA]</scope>
</reference>
<reference evidence="10" key="2">
    <citation type="submission" date="2009-11" db="EMBL/GenBank/DDBJ databases">
        <authorList>
            <consortium name="Porcine genome sequencing project"/>
        </authorList>
    </citation>
    <scope>NUCLEOTIDE SEQUENCE [LARGE SCALE GENOMIC DNA]</scope>
    <source>
        <strain evidence="10">Duroc</strain>
    </source>
</reference>
<reference evidence="11 12" key="3">
    <citation type="journal article" date="2015" name="Science">
        <title>The structure of the dynactin complex and its interaction with dynein.</title>
        <authorList>
            <person name="Urnavicius L."/>
            <person name="Zhang K."/>
            <person name="Diamant A.G."/>
            <person name="Motz C."/>
            <person name="Schlager M.A."/>
            <person name="Yu M."/>
            <person name="Patel N.A."/>
            <person name="Robinson C.V."/>
            <person name="Carter A.P."/>
        </authorList>
    </citation>
    <scope>STRUCTURE BY ELECTRON MICROSCOPY (4.00 ANGSTROMS) OF 1-71 AND 1-20</scope>
    <scope>FUNCTION</scope>
    <scope>SUBUNIT</scope>
</reference>
<reference evidence="13 14" key="4">
    <citation type="journal article" date="2018" name="Nature">
        <title>Cryo-EM shows how dynactin recruits two dyneins for faster movement.</title>
        <authorList>
            <person name="Urnavicius L."/>
            <person name="Lau C.K."/>
            <person name="Elshenawy M.M."/>
            <person name="Morales-Rios E."/>
            <person name="Motz C."/>
            <person name="Yildiz A."/>
            <person name="Carter A.P."/>
        </authorList>
    </citation>
    <scope>STRUCTURE BY ELECTRON MICROSCOPY (3.50 ANGSTROMS)</scope>
    <scope>SUBUNIT</scope>
    <scope>FUNCTION</scope>
</reference>
<reference evidence="15 16" key="5">
    <citation type="journal article" date="2021" name="EMBO J.">
        <title>Cryo-EM reveals the complex architecture of dynactin's shoulder region and pointed end.</title>
        <authorList>
            <person name="Lau C.K."/>
            <person name="O'Reilly F.J."/>
            <person name="Santhanam B."/>
            <person name="Lacey S.E."/>
            <person name="Rappsilber J."/>
            <person name="Carter A.P."/>
        </authorList>
    </citation>
    <scope>STRUCTURE BY ELECTRON MICROSCOPY (3.80 ANGSTROMS)</scope>
    <scope>SUBUNIT</scope>
    <scope>FUNCTION</scope>
</reference>
<reference evidence="17 18" key="6">
    <citation type="journal article" date="2022" name="Nature">
        <title>Structure of dynein-dynactin on microtubules shows tandem adaptor binding.</title>
        <authorList>
            <person name="Chaaban S."/>
            <person name="Carter A.P."/>
        </authorList>
    </citation>
    <scope>STRUCTURE BY ELECTRON MICROSCOPY (3.37 ANGSTROMS)</scope>
    <scope>SUBUNIT</scope>
    <scope>FUNCTION</scope>
</reference>
<evidence type="ECO:0000250" key="1">
    <source>
        <dbReference type="UniProtKB" id="O00399"/>
    </source>
</evidence>
<evidence type="ECO:0000250" key="2">
    <source>
        <dbReference type="UniProtKB" id="Q9WUB4"/>
    </source>
</evidence>
<evidence type="ECO:0000269" key="3">
    <source>
    </source>
</evidence>
<evidence type="ECO:0000269" key="4">
    <source>
    </source>
</evidence>
<evidence type="ECO:0000269" key="5">
    <source>
    </source>
</evidence>
<evidence type="ECO:0000269" key="6">
    <source>
    </source>
</evidence>
<evidence type="ECO:0000305" key="7"/>
<evidence type="ECO:0000305" key="8">
    <source>
    </source>
</evidence>
<evidence type="ECO:0000312" key="9">
    <source>
        <dbReference type="EMBL" id="BAI47779.1"/>
    </source>
</evidence>
<evidence type="ECO:0000312" key="10">
    <source>
        <dbReference type="Proteomes" id="UP000008227"/>
    </source>
</evidence>
<evidence type="ECO:0007744" key="11">
    <source>
        <dbReference type="PDB" id="5ADX"/>
    </source>
</evidence>
<evidence type="ECO:0007744" key="12">
    <source>
        <dbReference type="PDB" id="5AFU"/>
    </source>
</evidence>
<evidence type="ECO:0007744" key="13">
    <source>
        <dbReference type="PDB" id="6F1T"/>
    </source>
</evidence>
<evidence type="ECO:0007744" key="14">
    <source>
        <dbReference type="PDB" id="6F38"/>
    </source>
</evidence>
<evidence type="ECO:0007744" key="15">
    <source>
        <dbReference type="PDB" id="6ZNL"/>
    </source>
</evidence>
<evidence type="ECO:0007744" key="16">
    <source>
        <dbReference type="PDB" id="6ZNM"/>
    </source>
</evidence>
<evidence type="ECO:0007744" key="17">
    <source>
        <dbReference type="PDB" id="7Z8F"/>
    </source>
</evidence>
<evidence type="ECO:0007744" key="18">
    <source>
        <dbReference type="PDB" id="7Z8M"/>
    </source>
</evidence>
<evidence type="ECO:0007829" key="19">
    <source>
        <dbReference type="PDB" id="6F1T"/>
    </source>
</evidence>
<evidence type="ECO:0007829" key="20">
    <source>
        <dbReference type="PDB" id="7Z8M"/>
    </source>
</evidence>
<evidence type="ECO:0007829" key="21">
    <source>
        <dbReference type="PDB" id="8PR4"/>
    </source>
</evidence>
<keyword id="KW-0002">3D-structure</keyword>
<keyword id="KW-0137">Centromere</keyword>
<keyword id="KW-0158">Chromosome</keyword>
<keyword id="KW-0963">Cytoplasm</keyword>
<keyword id="KW-0206">Cytoskeleton</keyword>
<keyword id="KW-0995">Kinetochore</keyword>
<keyword id="KW-0597">Phosphoprotein</keyword>
<keyword id="KW-1185">Reference proteome</keyword>
<sequence length="190" mass="20681">MAEKTQKSVKIAPGAVVCVESEIRGDVTIGPRTVIHPKARIIAEAGPIVIGEGNLIEEQALIINAHPDNITPDAEDSEPKPMIIGTNNVFEVGCYSQAMKMGDNNVIESKAYVGRNVILTSGCIIGACCNLNTFEVIPENTVIYGADCLRRVQTERPQPQTLQLDFLMKILPNYHHLKKTMKGSSTPVKN</sequence>
<comment type="function">
    <text evidence="3 4 5 6">Part of the dynactin complex that activates the molecular motor dynein for ultra-processive transport along microtubules.</text>
</comment>
<comment type="subunit">
    <text evidence="1 2 3 4 5 6">Subunit of dynactin, a multiprotein complex part of a tripartite complex with dynein and a adapter, such as BICDL1, BICD2 or HOOK3 (PubMed:25814576, PubMed:29420470, PubMed:33734450, PubMed:36071160). The dynactin complex is built around ACTR1A/ACTB filament and consists of an actin-related filament composed of a shoulder domain, a pointed end and a barbed end. Its length is defined by its flexible shoulder domain. The soulder is composed of 2 DCTN1 subunits, 4 DCTN2 and 2 DCTN3. The 4 DCNT2 (via N-terminus) bind the ACTR1A filament and act as molecular rulers to determine the length. The pointed end is important for binding dynein-dynactin cargo adapters. Consists of 4 subunits: ACTR10, DCNT4, DCTN5 and DCTN6. Within the complex DCTN6 forms a heterodimer with DCTN5 (PubMed:33734450). The barbed end is composed of a CAPZA1:CAPZB heterodimers, which binds ACTR1A/ACTB filament and dynactin and stabilizes dynactin (PubMed:25814576, PubMed:29420470, PubMed:33734450, PubMed:36071160). Interacts with PLK1 (By similarity). Interacts with N4BP2L1 (By similarity).</text>
</comment>
<comment type="subcellular location">
    <subcellularLocation>
        <location evidence="8">Cytoplasm</location>
        <location evidence="8">Cytoskeleton</location>
    </subcellularLocation>
    <subcellularLocation>
        <location evidence="1">Chromosome</location>
        <location evidence="1">Centromere</location>
        <location evidence="1">Kinetochore</location>
    </subcellularLocation>
</comment>
<comment type="PTM">
    <text evidence="1">Phosphorylation at Thr-186 by CDK1 during mitotic prometaphase creates a binding site for PLK1 that facilitates its recruitment to kinetochores.</text>
</comment>
<comment type="similarity">
    <text evidence="7">Belongs to the dynactin subunits 5/6 family. Dynactin subunit 6 subfamily.</text>
</comment>
<feature type="chain" id="PRO_0000457466" description="Dynactin subunit 6">
    <location>
        <begin position="1"/>
        <end position="190"/>
    </location>
</feature>
<feature type="modified residue" description="Phosphothreonine" evidence="1">
    <location>
        <position position="186"/>
    </location>
</feature>
<feature type="strand" evidence="21">
    <location>
        <begin position="9"/>
        <end position="11"/>
    </location>
</feature>
<feature type="strand" evidence="21">
    <location>
        <begin position="16"/>
        <end position="21"/>
    </location>
</feature>
<feature type="strand" evidence="20">
    <location>
        <begin position="23"/>
        <end position="29"/>
    </location>
</feature>
<feature type="strand" evidence="19">
    <location>
        <begin position="33"/>
        <end position="35"/>
    </location>
</feature>
<feature type="strand" evidence="20">
    <location>
        <begin position="40"/>
        <end position="42"/>
    </location>
</feature>
<feature type="strand" evidence="20">
    <location>
        <begin position="44"/>
        <end position="46"/>
    </location>
</feature>
<feature type="strand" evidence="20">
    <location>
        <begin position="48"/>
        <end position="50"/>
    </location>
</feature>
<feature type="strand" evidence="19">
    <location>
        <begin position="52"/>
        <end position="56"/>
    </location>
</feature>
<feature type="strand" evidence="20">
    <location>
        <begin position="61"/>
        <end position="63"/>
    </location>
</feature>
<feature type="turn" evidence="20">
    <location>
        <begin position="68"/>
        <end position="70"/>
    </location>
</feature>
<feature type="turn" evidence="20">
    <location>
        <begin position="74"/>
        <end position="77"/>
    </location>
</feature>
<feature type="strand" evidence="20">
    <location>
        <begin position="82"/>
        <end position="84"/>
    </location>
</feature>
<feature type="strand" evidence="19">
    <location>
        <begin position="95"/>
        <end position="98"/>
    </location>
</feature>
<feature type="strand" evidence="20">
    <location>
        <begin position="99"/>
        <end position="101"/>
    </location>
</feature>
<feature type="strand" evidence="19">
    <location>
        <begin position="105"/>
        <end position="107"/>
    </location>
</feature>
<feature type="strand" evidence="19">
    <location>
        <begin position="115"/>
        <end position="117"/>
    </location>
</feature>
<feature type="strand" evidence="19">
    <location>
        <begin position="121"/>
        <end position="125"/>
    </location>
</feature>
<feature type="strand" evidence="21">
    <location>
        <begin position="134"/>
        <end position="137"/>
    </location>
</feature>
<feature type="strand" evidence="20">
    <location>
        <begin position="141"/>
        <end position="143"/>
    </location>
</feature>
<feature type="strand" evidence="20">
    <location>
        <begin position="146"/>
        <end position="148"/>
    </location>
</feature>
<feature type="strand" evidence="20">
    <location>
        <begin position="151"/>
        <end position="153"/>
    </location>
</feature>
<feature type="helix" evidence="20">
    <location>
        <begin position="161"/>
        <end position="174"/>
    </location>
</feature>
<organism evidence="9">
    <name type="scientific">Sus scrofa</name>
    <name type="common">Pig</name>
    <dbReference type="NCBI Taxonomy" id="9823"/>
    <lineage>
        <taxon>Eukaryota</taxon>
        <taxon>Metazoa</taxon>
        <taxon>Chordata</taxon>
        <taxon>Craniata</taxon>
        <taxon>Vertebrata</taxon>
        <taxon>Euteleostomi</taxon>
        <taxon>Mammalia</taxon>
        <taxon>Eutheria</taxon>
        <taxon>Laurasiatheria</taxon>
        <taxon>Artiodactyla</taxon>
        <taxon>Suina</taxon>
        <taxon>Suidae</taxon>
        <taxon>Sus</taxon>
    </lineage>
</organism>
<name>DCTN6_PIG</name>
<protein>
    <recommendedName>
        <fullName>Dynactin subunit 6</fullName>
    </recommendedName>
</protein>
<proteinExistence type="evidence at protein level"/>
<accession>D0G6S1</accession>
<dbReference type="EMBL" id="AEMK02000100">
    <property type="status" value="NOT_ANNOTATED_CDS"/>
    <property type="molecule type" value="Genomic_DNA"/>
</dbReference>
<dbReference type="EMBL" id="AB529454">
    <property type="protein sequence ID" value="BAI47779.1"/>
    <property type="molecule type" value="mRNA"/>
</dbReference>
<dbReference type="RefSeq" id="NP_001161116.1">
    <property type="nucleotide sequence ID" value="NM_001167644.1"/>
</dbReference>
<dbReference type="PDB" id="5ADX">
    <property type="method" value="EM"/>
    <property type="resolution" value="4.00 A"/>
    <property type="chains" value="U=1-190"/>
</dbReference>
<dbReference type="PDB" id="5AFU">
    <property type="method" value="EM"/>
    <property type="resolution" value="3.50 A"/>
    <property type="chains" value="U=13-185"/>
</dbReference>
<dbReference type="PDB" id="5NW4">
    <property type="method" value="EM"/>
    <property type="resolution" value="8.70 A"/>
    <property type="chains" value="g=1-190"/>
</dbReference>
<dbReference type="PDB" id="6F1T">
    <property type="method" value="EM"/>
    <property type="resolution" value="3.50 A"/>
    <property type="chains" value="U=1-190"/>
</dbReference>
<dbReference type="PDB" id="6F38">
    <property type="method" value="EM"/>
    <property type="resolution" value="6.70 A"/>
    <property type="chains" value="U=1-190"/>
</dbReference>
<dbReference type="PDB" id="6F3A">
    <property type="method" value="EM"/>
    <property type="resolution" value="8.20 A"/>
    <property type="chains" value="U=1-190"/>
</dbReference>
<dbReference type="PDB" id="6ZNL">
    <property type="method" value="EM"/>
    <property type="resolution" value="3.80 A"/>
    <property type="chains" value="U=1-190"/>
</dbReference>
<dbReference type="PDB" id="6ZNM">
    <property type="method" value="EM"/>
    <property type="resolution" value="4.10 A"/>
    <property type="chains" value="U=1-190"/>
</dbReference>
<dbReference type="PDB" id="6ZNN">
    <property type="method" value="EM"/>
    <property type="resolution" value="4.50 A"/>
    <property type="chains" value="U=1-190"/>
</dbReference>
<dbReference type="PDB" id="6ZNO">
    <property type="method" value="EM"/>
    <property type="resolution" value="6.80 A"/>
    <property type="chains" value="U=8-174"/>
</dbReference>
<dbReference type="PDB" id="6ZO4">
    <property type="method" value="EM"/>
    <property type="resolution" value="8.20 A"/>
    <property type="chains" value="U=1-190"/>
</dbReference>
<dbReference type="PDB" id="7Z8F">
    <property type="method" value="EM"/>
    <property type="resolution" value="20.00 A"/>
    <property type="chains" value="U=1-190"/>
</dbReference>
<dbReference type="PDB" id="7Z8M">
    <property type="method" value="EM"/>
    <property type="resolution" value="3.37 A"/>
    <property type="chains" value="U=1-190"/>
</dbReference>
<dbReference type="PDB" id="8PR4">
    <property type="method" value="EM"/>
    <property type="resolution" value="3.50 A"/>
    <property type="chains" value="U=1-190"/>
</dbReference>
<dbReference type="PDB" id="8PTK">
    <property type="method" value="EM"/>
    <property type="resolution" value="10.00 A"/>
    <property type="chains" value="U=1-190"/>
</dbReference>
<dbReference type="PDBsum" id="5ADX"/>
<dbReference type="PDBsum" id="5AFU"/>
<dbReference type="PDBsum" id="5NW4"/>
<dbReference type="PDBsum" id="6F1T"/>
<dbReference type="PDBsum" id="6F38"/>
<dbReference type="PDBsum" id="6F3A"/>
<dbReference type="PDBsum" id="6ZNL"/>
<dbReference type="PDBsum" id="6ZNM"/>
<dbReference type="PDBsum" id="6ZNN"/>
<dbReference type="PDBsum" id="6ZNO"/>
<dbReference type="PDBsum" id="6ZO4"/>
<dbReference type="PDBsum" id="7Z8F"/>
<dbReference type="PDBsum" id="7Z8M"/>
<dbReference type="PDBsum" id="8PR4"/>
<dbReference type="PDBsum" id="8PTK"/>
<dbReference type="EMDB" id="EMD-11313"/>
<dbReference type="EMDB" id="EMD-11317"/>
<dbReference type="EMDB" id="EMD-11318"/>
<dbReference type="EMDB" id="EMD-11319"/>
<dbReference type="EMDB" id="EMD-14549"/>
<dbReference type="EMDB" id="EMD-14559"/>
<dbReference type="EMDB" id="EMD-17834"/>
<dbReference type="EMDB" id="EMD-17873"/>
<dbReference type="EMDB" id="EMD-2856"/>
<dbReference type="EMDB" id="EMD-2857"/>
<dbReference type="EMDB" id="EMD-3706"/>
<dbReference type="EMDB" id="EMD-4168"/>
<dbReference type="EMDB" id="EMD-4177"/>
<dbReference type="SMR" id="D0G6S1"/>
<dbReference type="FunCoup" id="D0G6S1">
    <property type="interactions" value="1160"/>
</dbReference>
<dbReference type="STRING" id="9823.ENSSSCP00000039236"/>
<dbReference type="PaxDb" id="9823-ENSSSCP00000027194"/>
<dbReference type="PeptideAtlas" id="D0G6S1"/>
<dbReference type="PRIDE" id="D0G6S1"/>
<dbReference type="Ensembl" id="ENSSSCT00000050716.3">
    <property type="protein sequence ID" value="ENSSSCP00000039236.1"/>
    <property type="gene ID" value="ENSSSCG00000038895.3"/>
</dbReference>
<dbReference type="Ensembl" id="ENSSSCT00015097587.1">
    <property type="protein sequence ID" value="ENSSSCP00015040105.1"/>
    <property type="gene ID" value="ENSSSCG00015072413.1"/>
</dbReference>
<dbReference type="Ensembl" id="ENSSSCT00025079008.1">
    <property type="protein sequence ID" value="ENSSSCP00025034301.1"/>
    <property type="gene ID" value="ENSSSCG00025057660.1"/>
</dbReference>
<dbReference type="Ensembl" id="ENSSSCT00030103909.1">
    <property type="protein sequence ID" value="ENSSSCP00030048072.1"/>
    <property type="gene ID" value="ENSSSCG00030074109.1"/>
</dbReference>
<dbReference type="Ensembl" id="ENSSSCT00035073524.1">
    <property type="protein sequence ID" value="ENSSSCP00035029813.1"/>
    <property type="gene ID" value="ENSSSCG00035055122.1"/>
</dbReference>
<dbReference type="Ensembl" id="ENSSSCT00040056977.1">
    <property type="protein sequence ID" value="ENSSSCP00040023687.1"/>
    <property type="gene ID" value="ENSSSCG00040042559.1"/>
</dbReference>
<dbReference type="Ensembl" id="ENSSSCT00045002605.1">
    <property type="protein sequence ID" value="ENSSSCP00045001650.1"/>
    <property type="gene ID" value="ENSSSCG00045001629.1"/>
</dbReference>
<dbReference type="Ensembl" id="ENSSSCT00050005445.1">
    <property type="protein sequence ID" value="ENSSSCP00050002267.1"/>
    <property type="gene ID" value="ENSSSCG00050004006.1"/>
</dbReference>
<dbReference type="Ensembl" id="ENSSSCT00055037792.1">
    <property type="protein sequence ID" value="ENSSSCP00055030036.1"/>
    <property type="gene ID" value="ENSSSCG00055019277.1"/>
</dbReference>
<dbReference type="Ensembl" id="ENSSSCT00060054560.1">
    <property type="protein sequence ID" value="ENSSSCP00060023265.1"/>
    <property type="gene ID" value="ENSSSCG00060040289.1"/>
</dbReference>
<dbReference type="Ensembl" id="ENSSSCT00065055117.1">
    <property type="protein sequence ID" value="ENSSSCP00065023956.1"/>
    <property type="gene ID" value="ENSSSCG00065040295.1"/>
</dbReference>
<dbReference type="Ensembl" id="ENSSSCT00070053145.1">
    <property type="protein sequence ID" value="ENSSSCP00070045025.1"/>
    <property type="gene ID" value="ENSSSCG00070026519.1"/>
</dbReference>
<dbReference type="Ensembl" id="ENSSSCT00115009148">
    <property type="protein sequence ID" value="ENSSSCP00115008600"/>
    <property type="gene ID" value="ENSSSCG00115005290"/>
</dbReference>
<dbReference type="GeneID" id="100312966"/>
<dbReference type="KEGG" id="ssc:100312966"/>
<dbReference type="CTD" id="10671"/>
<dbReference type="VGNC" id="VGNC:95826">
    <property type="gene designation" value="DCTN6"/>
</dbReference>
<dbReference type="eggNOG" id="KOG4042">
    <property type="taxonomic scope" value="Eukaryota"/>
</dbReference>
<dbReference type="GeneTree" id="ENSGT00390000017890"/>
<dbReference type="HOGENOM" id="CLU_085418_1_0_1"/>
<dbReference type="InParanoid" id="D0G6S1"/>
<dbReference type="OMA" id="ITMQAET"/>
<dbReference type="OrthoDB" id="2355at2759"/>
<dbReference type="TreeFam" id="TF352888"/>
<dbReference type="Reactome" id="R-SSC-2132295">
    <property type="pathway name" value="MHC class II antigen presentation"/>
</dbReference>
<dbReference type="Reactome" id="R-SSC-3371497">
    <property type="pathway name" value="HSP90 chaperone cycle for steroid hormone receptors (SHR) in the presence of ligand"/>
</dbReference>
<dbReference type="Reactome" id="R-SSC-6807878">
    <property type="pathway name" value="COPI-mediated anterograde transport"/>
</dbReference>
<dbReference type="EvolutionaryTrace" id="D0G6S1"/>
<dbReference type="Proteomes" id="UP000008227">
    <property type="component" value="Chromosome 15"/>
</dbReference>
<dbReference type="Proteomes" id="UP000314985">
    <property type="component" value="Chromosome 15"/>
</dbReference>
<dbReference type="Proteomes" id="UP000694570">
    <property type="component" value="Unplaced"/>
</dbReference>
<dbReference type="Proteomes" id="UP000694571">
    <property type="component" value="Unplaced"/>
</dbReference>
<dbReference type="Proteomes" id="UP000694720">
    <property type="component" value="Unplaced"/>
</dbReference>
<dbReference type="Proteomes" id="UP000694722">
    <property type="component" value="Unplaced"/>
</dbReference>
<dbReference type="Proteomes" id="UP000694723">
    <property type="component" value="Unplaced"/>
</dbReference>
<dbReference type="Proteomes" id="UP000694724">
    <property type="component" value="Unplaced"/>
</dbReference>
<dbReference type="Proteomes" id="UP000694725">
    <property type="component" value="Unplaced"/>
</dbReference>
<dbReference type="Proteomes" id="UP000694726">
    <property type="component" value="Unplaced"/>
</dbReference>
<dbReference type="Proteomes" id="UP000694727">
    <property type="component" value="Unplaced"/>
</dbReference>
<dbReference type="Proteomes" id="UP000694728">
    <property type="component" value="Unplaced"/>
</dbReference>
<dbReference type="Bgee" id="ENSSSCG00000038895">
    <property type="expression patterns" value="Expressed in stomach and 44 other cell types or tissues"/>
</dbReference>
<dbReference type="ExpressionAtlas" id="D0G6S1">
    <property type="expression patterns" value="baseline and differential"/>
</dbReference>
<dbReference type="GO" id="GO:0005813">
    <property type="term" value="C:centrosome"/>
    <property type="evidence" value="ECO:0007669"/>
    <property type="project" value="Ensembl"/>
</dbReference>
<dbReference type="GO" id="GO:0005737">
    <property type="term" value="C:cytoplasm"/>
    <property type="evidence" value="ECO:0007669"/>
    <property type="project" value="UniProtKB-KW"/>
</dbReference>
<dbReference type="GO" id="GO:0005869">
    <property type="term" value="C:dynactin complex"/>
    <property type="evidence" value="ECO:0000318"/>
    <property type="project" value="GO_Central"/>
</dbReference>
<dbReference type="GO" id="GO:0000776">
    <property type="term" value="C:kinetochore"/>
    <property type="evidence" value="ECO:0007669"/>
    <property type="project" value="UniProtKB-KW"/>
</dbReference>
<dbReference type="GO" id="GO:0070840">
    <property type="term" value="F:dynein complex binding"/>
    <property type="evidence" value="ECO:0000318"/>
    <property type="project" value="GO_Central"/>
</dbReference>
<dbReference type="GO" id="GO:0007052">
    <property type="term" value="P:mitotic spindle organization"/>
    <property type="evidence" value="ECO:0000318"/>
    <property type="project" value="GO_Central"/>
</dbReference>
<dbReference type="CDD" id="cd04646">
    <property type="entry name" value="LbH_Dynactin_6"/>
    <property type="match status" value="1"/>
</dbReference>
<dbReference type="FunFam" id="2.160.10.10:FF:000021">
    <property type="entry name" value="dynactin subunit 6"/>
    <property type="match status" value="1"/>
</dbReference>
<dbReference type="Gene3D" id="2.160.10.10">
    <property type="entry name" value="Hexapeptide repeat proteins"/>
    <property type="match status" value="1"/>
</dbReference>
<dbReference type="InterPro" id="IPR027777">
    <property type="entry name" value="DCTN6"/>
</dbReference>
<dbReference type="InterPro" id="IPR011004">
    <property type="entry name" value="Trimer_LpxA-like_sf"/>
</dbReference>
<dbReference type="PANTHER" id="PTHR13072">
    <property type="entry name" value="DYNACTIN 6"/>
    <property type="match status" value="1"/>
</dbReference>
<dbReference type="PANTHER" id="PTHR13072:SF0">
    <property type="entry name" value="DYNACTIN SUBUNIT 6"/>
    <property type="match status" value="1"/>
</dbReference>
<dbReference type="SUPFAM" id="SSF51161">
    <property type="entry name" value="Trimeric LpxA-like enzymes"/>
    <property type="match status" value="1"/>
</dbReference>